<name>LYTH_STAAN</name>
<protein>
    <recommendedName>
        <fullName>Probable cell wall amidase LytH</fullName>
        <ecNumber>3.5.1.-</ecNumber>
    </recommendedName>
</protein>
<dbReference type="EC" id="3.5.1.-"/>
<dbReference type="EMBL" id="BA000018">
    <property type="protein sequence ID" value="BAB42724.1"/>
    <property type="molecule type" value="Genomic_DNA"/>
</dbReference>
<dbReference type="PIR" id="G89945">
    <property type="entry name" value="G89945"/>
</dbReference>
<dbReference type="RefSeq" id="WP_000717800.1">
    <property type="nucleotide sequence ID" value="NC_002745.2"/>
</dbReference>
<dbReference type="SMR" id="Q7A588"/>
<dbReference type="EnsemblBacteria" id="BAB42724">
    <property type="protein sequence ID" value="BAB42724"/>
    <property type="gene ID" value="BAB42724"/>
</dbReference>
<dbReference type="KEGG" id="sau:SA1458"/>
<dbReference type="HOGENOM" id="CLU_014322_1_1_9"/>
<dbReference type="GO" id="GO:0005576">
    <property type="term" value="C:extracellular region"/>
    <property type="evidence" value="ECO:0007669"/>
    <property type="project" value="UniProtKB-SubCell"/>
</dbReference>
<dbReference type="GO" id="GO:0030288">
    <property type="term" value="C:outer membrane-bounded periplasmic space"/>
    <property type="evidence" value="ECO:0007669"/>
    <property type="project" value="TreeGrafter"/>
</dbReference>
<dbReference type="GO" id="GO:0008745">
    <property type="term" value="F:N-acetylmuramoyl-L-alanine amidase activity"/>
    <property type="evidence" value="ECO:0007669"/>
    <property type="project" value="InterPro"/>
</dbReference>
<dbReference type="GO" id="GO:0071555">
    <property type="term" value="P:cell wall organization"/>
    <property type="evidence" value="ECO:0007669"/>
    <property type="project" value="UniProtKB-KW"/>
</dbReference>
<dbReference type="GO" id="GO:0009253">
    <property type="term" value="P:peptidoglycan catabolic process"/>
    <property type="evidence" value="ECO:0007669"/>
    <property type="project" value="InterPro"/>
</dbReference>
<dbReference type="CDD" id="cd02696">
    <property type="entry name" value="MurNAc-LAA"/>
    <property type="match status" value="1"/>
</dbReference>
<dbReference type="Gene3D" id="2.30.30.40">
    <property type="entry name" value="SH3 Domains"/>
    <property type="match status" value="1"/>
</dbReference>
<dbReference type="Gene3D" id="3.40.630.40">
    <property type="entry name" value="Zn-dependent exopeptidases"/>
    <property type="match status" value="1"/>
</dbReference>
<dbReference type="InterPro" id="IPR017273">
    <property type="entry name" value="LytH"/>
</dbReference>
<dbReference type="InterPro" id="IPR002508">
    <property type="entry name" value="MurNAc-LAA_cat"/>
</dbReference>
<dbReference type="InterPro" id="IPR050695">
    <property type="entry name" value="N-acetylmuramoyl_amidase_3"/>
</dbReference>
<dbReference type="InterPro" id="IPR003646">
    <property type="entry name" value="SH3-like_bac-type"/>
</dbReference>
<dbReference type="PANTHER" id="PTHR30404:SF7">
    <property type="entry name" value="CELL WALL AMIDASE LYTH-RELATED"/>
    <property type="match status" value="1"/>
</dbReference>
<dbReference type="PANTHER" id="PTHR30404">
    <property type="entry name" value="N-ACETYLMURAMOYL-L-ALANINE AMIDASE"/>
    <property type="match status" value="1"/>
</dbReference>
<dbReference type="Pfam" id="PF01520">
    <property type="entry name" value="Amidase_3"/>
    <property type="match status" value="1"/>
</dbReference>
<dbReference type="Pfam" id="PF08239">
    <property type="entry name" value="SH3_3"/>
    <property type="match status" value="1"/>
</dbReference>
<dbReference type="PIRSF" id="PIRSF037730">
    <property type="entry name" value="CWA_LytH_prd"/>
    <property type="match status" value="1"/>
</dbReference>
<dbReference type="SMART" id="SM00646">
    <property type="entry name" value="Ami_3"/>
    <property type="match status" value="1"/>
</dbReference>
<dbReference type="SMART" id="SM00287">
    <property type="entry name" value="SH3b"/>
    <property type="match status" value="1"/>
</dbReference>
<dbReference type="SUPFAM" id="SSF53187">
    <property type="entry name" value="Zn-dependent exopeptidases"/>
    <property type="match status" value="1"/>
</dbReference>
<dbReference type="PROSITE" id="PS51781">
    <property type="entry name" value="SH3B"/>
    <property type="match status" value="1"/>
</dbReference>
<gene>
    <name type="primary">lytH</name>
    <name type="ordered locus">SA1458</name>
</gene>
<accession>Q7A588</accession>
<evidence type="ECO:0000250" key="1"/>
<evidence type="ECO:0000255" key="2"/>
<evidence type="ECO:0000255" key="3">
    <source>
        <dbReference type="PROSITE-ProRule" id="PRU01117"/>
    </source>
</evidence>
<evidence type="ECO:0000256" key="4">
    <source>
        <dbReference type="SAM" id="MobiDB-lite"/>
    </source>
</evidence>
<evidence type="ECO:0000305" key="5"/>
<keyword id="KW-0961">Cell wall biogenesis/degradation</keyword>
<keyword id="KW-0378">Hydrolase</keyword>
<keyword id="KW-0964">Secreted</keyword>
<keyword id="KW-0732">Signal</keyword>
<sequence>MKKIEAWLSKKGLKNKRTLIVVIAFVLFIIFLFLLLNSNSEDSGNITITENAELRTGPNAAYPVIYKVEKGDHFKKIGKVGKWIEVEDTSSNEKGWIAGWHTNLDIVADNTKEKNPLQGKTIVLDPGHGGSDQGASSNTKYKSLEKDYTLKTAKELQRTLEKEGATVKMTRTDDTYVSLENRDIKGDAYLSIHNDALESSNANGMTVYWYHDNQRALADTLDATIQKKGLLSNRGSRQENYQVLRQTKVPAVLLELGYISNPTDETMIKDQLHRQILEQAIVDGLKIYFSA</sequence>
<feature type="signal peptide" evidence="2">
    <location>
        <begin position="1"/>
        <end position="40"/>
    </location>
</feature>
<feature type="chain" id="PRO_0000226283" description="Probable cell wall amidase LytH">
    <location>
        <begin position="41"/>
        <end position="291"/>
    </location>
</feature>
<feature type="domain" description="SH3b" evidence="3">
    <location>
        <begin position="41"/>
        <end position="105"/>
    </location>
</feature>
<feature type="domain" description="MurNAc-LAA" evidence="2">
    <location>
        <begin position="122"/>
        <end position="286"/>
    </location>
</feature>
<feature type="region of interest" description="Disordered" evidence="4">
    <location>
        <begin position="118"/>
        <end position="140"/>
    </location>
</feature>
<comment type="function">
    <text evidence="1">Probably involved in cell-wall metabolism.</text>
</comment>
<comment type="subcellular location">
    <subcellularLocation>
        <location evidence="5">Secreted</location>
    </subcellularLocation>
</comment>
<comment type="similarity">
    <text evidence="5">Belongs to the N-acetylmuramoyl-L-alanine amidase 3 family.</text>
</comment>
<proteinExistence type="inferred from homology"/>
<reference key="1">
    <citation type="journal article" date="2001" name="Lancet">
        <title>Whole genome sequencing of meticillin-resistant Staphylococcus aureus.</title>
        <authorList>
            <person name="Kuroda M."/>
            <person name="Ohta T."/>
            <person name="Uchiyama I."/>
            <person name="Baba T."/>
            <person name="Yuzawa H."/>
            <person name="Kobayashi I."/>
            <person name="Cui L."/>
            <person name="Oguchi A."/>
            <person name="Aoki K."/>
            <person name="Nagai Y."/>
            <person name="Lian J.-Q."/>
            <person name="Ito T."/>
            <person name="Kanamori M."/>
            <person name="Matsumaru H."/>
            <person name="Maruyama A."/>
            <person name="Murakami H."/>
            <person name="Hosoyama A."/>
            <person name="Mizutani-Ui Y."/>
            <person name="Takahashi N.K."/>
            <person name="Sawano T."/>
            <person name="Inoue R."/>
            <person name="Kaito C."/>
            <person name="Sekimizu K."/>
            <person name="Hirakawa H."/>
            <person name="Kuhara S."/>
            <person name="Goto S."/>
            <person name="Yabuzaki J."/>
            <person name="Kanehisa M."/>
            <person name="Yamashita A."/>
            <person name="Oshima K."/>
            <person name="Furuya K."/>
            <person name="Yoshino C."/>
            <person name="Shiba T."/>
            <person name="Hattori M."/>
            <person name="Ogasawara N."/>
            <person name="Hayashi H."/>
            <person name="Hiramatsu K."/>
        </authorList>
    </citation>
    <scope>NUCLEOTIDE SEQUENCE [LARGE SCALE GENOMIC DNA]</scope>
    <source>
        <strain>N315</strain>
    </source>
</reference>
<organism>
    <name type="scientific">Staphylococcus aureus (strain N315)</name>
    <dbReference type="NCBI Taxonomy" id="158879"/>
    <lineage>
        <taxon>Bacteria</taxon>
        <taxon>Bacillati</taxon>
        <taxon>Bacillota</taxon>
        <taxon>Bacilli</taxon>
        <taxon>Bacillales</taxon>
        <taxon>Staphylococcaceae</taxon>
        <taxon>Staphylococcus</taxon>
    </lineage>
</organism>